<proteinExistence type="inferred from homology"/>
<keyword id="KW-0963">Cytoplasm</keyword>
<keyword id="KW-0456">Lyase</keyword>
<keyword id="KW-0663">Pyridoxal phosphate</keyword>
<keyword id="KW-0808">Transferase</keyword>
<name>SUFS_KLEP7</name>
<gene>
    <name evidence="1" type="primary">sufS</name>
    <name type="ordered locus">KPN78578_21040</name>
    <name type="ORF">KPN_02137</name>
</gene>
<feature type="chain" id="PRO_1000070427" description="Cysteine desulfurase">
    <location>
        <begin position="1"/>
        <end position="406"/>
    </location>
</feature>
<feature type="active site" description="Cysteine persulfide intermediate" evidence="1">
    <location>
        <position position="364"/>
    </location>
</feature>
<feature type="modified residue" description="N6-(pyridoxal phosphate)lysine" evidence="1">
    <location>
        <position position="226"/>
    </location>
</feature>
<protein>
    <recommendedName>
        <fullName evidence="1">Cysteine desulfurase</fullName>
        <ecNumber evidence="1">2.8.1.7</ecNumber>
    </recommendedName>
    <alternativeName>
        <fullName evidence="1">Selenocysteine beta-lyase</fullName>
        <shortName evidence="1">SCL</shortName>
    </alternativeName>
    <alternativeName>
        <fullName evidence="1">Selenocysteine lyase</fullName>
        <ecNumber evidence="1">4.4.1.16</ecNumber>
    </alternativeName>
    <alternativeName>
        <fullName evidence="1">Selenocysteine reductase</fullName>
    </alternativeName>
</protein>
<organism>
    <name type="scientific">Klebsiella pneumoniae subsp. pneumoniae (strain ATCC 700721 / MGH 78578)</name>
    <dbReference type="NCBI Taxonomy" id="272620"/>
    <lineage>
        <taxon>Bacteria</taxon>
        <taxon>Pseudomonadati</taxon>
        <taxon>Pseudomonadota</taxon>
        <taxon>Gammaproteobacteria</taxon>
        <taxon>Enterobacterales</taxon>
        <taxon>Enterobacteriaceae</taxon>
        <taxon>Klebsiella/Raoultella group</taxon>
        <taxon>Klebsiella</taxon>
        <taxon>Klebsiella pneumoniae complex</taxon>
    </lineage>
</organism>
<accession>A6TAE4</accession>
<dbReference type="EC" id="2.8.1.7" evidence="1"/>
<dbReference type="EC" id="4.4.1.16" evidence="1"/>
<dbReference type="EMBL" id="CP000647">
    <property type="protein sequence ID" value="ABR77565.1"/>
    <property type="molecule type" value="Genomic_DNA"/>
</dbReference>
<dbReference type="RefSeq" id="WP_002908867.1">
    <property type="nucleotide sequence ID" value="NC_009648.1"/>
</dbReference>
<dbReference type="SMR" id="A6TAE4"/>
<dbReference type="STRING" id="272620.KPN_02137"/>
<dbReference type="jPOST" id="A6TAE4"/>
<dbReference type="PaxDb" id="272620-KPN_02137"/>
<dbReference type="EnsemblBacteria" id="ABR77565">
    <property type="protein sequence ID" value="ABR77565"/>
    <property type="gene ID" value="KPN_02137"/>
</dbReference>
<dbReference type="KEGG" id="kpn:KPN_02137"/>
<dbReference type="HOGENOM" id="CLU_003433_2_5_6"/>
<dbReference type="UniPathway" id="UPA00266"/>
<dbReference type="Proteomes" id="UP000000265">
    <property type="component" value="Chromosome"/>
</dbReference>
<dbReference type="GO" id="GO:0005737">
    <property type="term" value="C:cytoplasm"/>
    <property type="evidence" value="ECO:0007669"/>
    <property type="project" value="UniProtKB-SubCell"/>
</dbReference>
<dbReference type="GO" id="GO:0031071">
    <property type="term" value="F:cysteine desulfurase activity"/>
    <property type="evidence" value="ECO:0007669"/>
    <property type="project" value="UniProtKB-UniRule"/>
</dbReference>
<dbReference type="GO" id="GO:0030170">
    <property type="term" value="F:pyridoxal phosphate binding"/>
    <property type="evidence" value="ECO:0007669"/>
    <property type="project" value="InterPro"/>
</dbReference>
<dbReference type="GO" id="GO:0009000">
    <property type="term" value="F:selenocysteine lyase activity"/>
    <property type="evidence" value="ECO:0007669"/>
    <property type="project" value="UniProtKB-UniRule"/>
</dbReference>
<dbReference type="GO" id="GO:0006534">
    <property type="term" value="P:cysteine metabolic process"/>
    <property type="evidence" value="ECO:0007669"/>
    <property type="project" value="InterPro"/>
</dbReference>
<dbReference type="CDD" id="cd06453">
    <property type="entry name" value="SufS_like"/>
    <property type="match status" value="1"/>
</dbReference>
<dbReference type="FunFam" id="3.40.640.10:FF:000042">
    <property type="entry name" value="Cysteine desulfurase"/>
    <property type="match status" value="1"/>
</dbReference>
<dbReference type="Gene3D" id="3.90.1150.10">
    <property type="entry name" value="Aspartate Aminotransferase, domain 1"/>
    <property type="match status" value="1"/>
</dbReference>
<dbReference type="Gene3D" id="3.40.640.10">
    <property type="entry name" value="Type I PLP-dependent aspartate aminotransferase-like (Major domain)"/>
    <property type="match status" value="1"/>
</dbReference>
<dbReference type="HAMAP" id="MF_01831">
    <property type="entry name" value="SufS_aminotrans_5"/>
    <property type="match status" value="1"/>
</dbReference>
<dbReference type="InterPro" id="IPR000192">
    <property type="entry name" value="Aminotrans_V_dom"/>
</dbReference>
<dbReference type="InterPro" id="IPR020578">
    <property type="entry name" value="Aminotrans_V_PyrdxlP_BS"/>
</dbReference>
<dbReference type="InterPro" id="IPR010970">
    <property type="entry name" value="Cys_dSase_SufS"/>
</dbReference>
<dbReference type="InterPro" id="IPR015424">
    <property type="entry name" value="PyrdxlP-dep_Trfase"/>
</dbReference>
<dbReference type="InterPro" id="IPR015421">
    <property type="entry name" value="PyrdxlP-dep_Trfase_major"/>
</dbReference>
<dbReference type="InterPro" id="IPR015422">
    <property type="entry name" value="PyrdxlP-dep_Trfase_small"/>
</dbReference>
<dbReference type="NCBIfam" id="NF006791">
    <property type="entry name" value="PRK09295.1"/>
    <property type="match status" value="1"/>
</dbReference>
<dbReference type="NCBIfam" id="TIGR01979">
    <property type="entry name" value="sufS"/>
    <property type="match status" value="1"/>
</dbReference>
<dbReference type="PANTHER" id="PTHR43586">
    <property type="entry name" value="CYSTEINE DESULFURASE"/>
    <property type="match status" value="1"/>
</dbReference>
<dbReference type="PANTHER" id="PTHR43586:SF25">
    <property type="entry name" value="CYSTEINE DESULFURASE"/>
    <property type="match status" value="1"/>
</dbReference>
<dbReference type="Pfam" id="PF00266">
    <property type="entry name" value="Aminotran_5"/>
    <property type="match status" value="1"/>
</dbReference>
<dbReference type="SUPFAM" id="SSF53383">
    <property type="entry name" value="PLP-dependent transferases"/>
    <property type="match status" value="1"/>
</dbReference>
<dbReference type="PROSITE" id="PS00595">
    <property type="entry name" value="AA_TRANSFER_CLASS_5"/>
    <property type="match status" value="1"/>
</dbReference>
<reference key="1">
    <citation type="submission" date="2006-09" db="EMBL/GenBank/DDBJ databases">
        <authorList>
            <consortium name="The Klebsiella pneumonia Genome Sequencing Project"/>
            <person name="McClelland M."/>
            <person name="Sanderson E.K."/>
            <person name="Spieth J."/>
            <person name="Clifton W.S."/>
            <person name="Latreille P."/>
            <person name="Sabo A."/>
            <person name="Pepin K."/>
            <person name="Bhonagiri V."/>
            <person name="Porwollik S."/>
            <person name="Ali J."/>
            <person name="Wilson R.K."/>
        </authorList>
    </citation>
    <scope>NUCLEOTIDE SEQUENCE [LARGE SCALE GENOMIC DNA]</scope>
    <source>
        <strain>ATCC 700721 / MGH 78578</strain>
    </source>
</reference>
<comment type="function">
    <text evidence="1">Cysteine desulfurases mobilize the sulfur from L-cysteine to yield L-alanine, an essential step in sulfur metabolism for biosynthesis of a variety of sulfur-containing biomolecules. Component of the suf operon, which is activated and required under specific conditions such as oxidative stress and iron limitation. Acts as a potent selenocysteine lyase in vitro, that mobilizes selenium from L-selenocysteine. Selenocysteine lyase activity is however unsure in vivo.</text>
</comment>
<comment type="catalytic activity">
    <reaction evidence="1">
        <text>(sulfur carrier)-H + L-cysteine = (sulfur carrier)-SH + L-alanine</text>
        <dbReference type="Rhea" id="RHEA:43892"/>
        <dbReference type="Rhea" id="RHEA-COMP:14737"/>
        <dbReference type="Rhea" id="RHEA-COMP:14739"/>
        <dbReference type="ChEBI" id="CHEBI:29917"/>
        <dbReference type="ChEBI" id="CHEBI:35235"/>
        <dbReference type="ChEBI" id="CHEBI:57972"/>
        <dbReference type="ChEBI" id="CHEBI:64428"/>
        <dbReference type="EC" id="2.8.1.7"/>
    </reaction>
</comment>
<comment type="catalytic activity">
    <reaction evidence="1">
        <text>L-selenocysteine + AH2 = hydrogenselenide + L-alanine + A + H(+)</text>
        <dbReference type="Rhea" id="RHEA:11632"/>
        <dbReference type="ChEBI" id="CHEBI:13193"/>
        <dbReference type="ChEBI" id="CHEBI:15378"/>
        <dbReference type="ChEBI" id="CHEBI:17499"/>
        <dbReference type="ChEBI" id="CHEBI:29317"/>
        <dbReference type="ChEBI" id="CHEBI:57843"/>
        <dbReference type="ChEBI" id="CHEBI:57972"/>
        <dbReference type="EC" id="4.4.1.16"/>
    </reaction>
</comment>
<comment type="cofactor">
    <cofactor evidence="1">
        <name>pyridoxal 5'-phosphate</name>
        <dbReference type="ChEBI" id="CHEBI:597326"/>
    </cofactor>
</comment>
<comment type="pathway">
    <text evidence="1">Cofactor biosynthesis; iron-sulfur cluster biosynthesis.</text>
</comment>
<comment type="subunit">
    <text evidence="1">Homodimer. Interacts with SufE and the SufBCD complex composed of SufB, SufC and SufD. The interaction with SufE is required to mediate the direct transfer of the sulfur atom from the S-sulfanylcysteine.</text>
</comment>
<comment type="subcellular location">
    <subcellularLocation>
        <location evidence="1">Cytoplasm</location>
    </subcellularLocation>
</comment>
<comment type="similarity">
    <text evidence="1">Belongs to the class-V pyridoxal-phosphate-dependent aminotransferase family. Csd subfamily.</text>
</comment>
<sequence length="406" mass="43750">MTFSVEQVRADFPVLNREVNGQPLVYLDSAASAQKPEAVIGAEAEFYRHGYAAVHRGIHTLSAEATARMEAVRQQAATFLNAGSAEEVVFVRGTTEGINLVANSWGNANVGAGDNIIISEMEHHANIVPWQMLCARVGAELRVIPLNPDGTLQLDVVPGLFDPRTRLLAITEVSNVLGTENPLAALIALAHQHGAKVLVDGAQAVMHHPVDVQALGCDFYVFSAHKLYGPTGIGVLYARSELLQTMAPWEGGGSMIATVSLTEGTTWNQAPWRFEAGTPNTGGIIGLGAALTYVSQLGLTQIAEYEQTLMRYALDALRAVPDLILYGPAQRKGVIAFNLGQHHAYDVGSFLDNYGIAVRTGHHCAMPLMARYQVPAMCRASLAMYNTTEEVDRLVAGLQRIRKLLG</sequence>
<evidence type="ECO:0000255" key="1">
    <source>
        <dbReference type="HAMAP-Rule" id="MF_01831"/>
    </source>
</evidence>